<keyword id="KW-0378">Hydrolase</keyword>
<keyword id="KW-1185">Reference proteome</keyword>
<evidence type="ECO:0000255" key="1">
    <source>
        <dbReference type="HAMAP-Rule" id="MF_00199"/>
    </source>
</evidence>
<dbReference type="EC" id="3.6.1.41" evidence="1"/>
<dbReference type="EMBL" id="CP001321">
    <property type="protein sequence ID" value="ACL32292.1"/>
    <property type="molecule type" value="Genomic_DNA"/>
</dbReference>
<dbReference type="RefSeq" id="WP_005713726.1">
    <property type="nucleotide sequence ID" value="NC_011852.1"/>
</dbReference>
<dbReference type="SMR" id="B8F4P0"/>
<dbReference type="STRING" id="557723.HAPS_0643"/>
<dbReference type="GeneID" id="66619012"/>
<dbReference type="KEGG" id="hap:HAPS_0643"/>
<dbReference type="HOGENOM" id="CLU_056184_2_0_6"/>
<dbReference type="Proteomes" id="UP000006743">
    <property type="component" value="Chromosome"/>
</dbReference>
<dbReference type="GO" id="GO:0008803">
    <property type="term" value="F:bis(5'-nucleosyl)-tetraphosphatase (symmetrical) activity"/>
    <property type="evidence" value="ECO:0007669"/>
    <property type="project" value="UniProtKB-UniRule"/>
</dbReference>
<dbReference type="CDD" id="cd07422">
    <property type="entry name" value="MPP_ApaH"/>
    <property type="match status" value="1"/>
</dbReference>
<dbReference type="Gene3D" id="3.60.21.10">
    <property type="match status" value="1"/>
</dbReference>
<dbReference type="HAMAP" id="MF_00199">
    <property type="entry name" value="ApaH"/>
    <property type="match status" value="1"/>
</dbReference>
<dbReference type="InterPro" id="IPR004617">
    <property type="entry name" value="ApaH"/>
</dbReference>
<dbReference type="InterPro" id="IPR004843">
    <property type="entry name" value="Calcineurin-like_PHP_ApaH"/>
</dbReference>
<dbReference type="InterPro" id="IPR029052">
    <property type="entry name" value="Metallo-depent_PP-like"/>
</dbReference>
<dbReference type="NCBIfam" id="TIGR00668">
    <property type="entry name" value="apaH"/>
    <property type="match status" value="1"/>
</dbReference>
<dbReference type="NCBIfam" id="NF001204">
    <property type="entry name" value="PRK00166.1"/>
    <property type="match status" value="1"/>
</dbReference>
<dbReference type="PANTHER" id="PTHR40942">
    <property type="match status" value="1"/>
</dbReference>
<dbReference type="PANTHER" id="PTHR40942:SF4">
    <property type="entry name" value="CYTOCHROME C5"/>
    <property type="match status" value="1"/>
</dbReference>
<dbReference type="Pfam" id="PF00149">
    <property type="entry name" value="Metallophos"/>
    <property type="match status" value="1"/>
</dbReference>
<dbReference type="PIRSF" id="PIRSF000903">
    <property type="entry name" value="B5n-ttraPtase_sm"/>
    <property type="match status" value="1"/>
</dbReference>
<dbReference type="SUPFAM" id="SSF56300">
    <property type="entry name" value="Metallo-dependent phosphatases"/>
    <property type="match status" value="1"/>
</dbReference>
<name>APAH_GLAP5</name>
<gene>
    <name evidence="1" type="primary">apaH</name>
    <name type="ordered locus">HAPS_0643</name>
</gene>
<proteinExistence type="inferred from homology"/>
<comment type="function">
    <text evidence="1">Hydrolyzes diadenosine 5',5'''-P1,P4-tetraphosphate to yield ADP.</text>
</comment>
<comment type="catalytic activity">
    <reaction evidence="1">
        <text>P(1),P(4)-bis(5'-adenosyl) tetraphosphate + H2O = 2 ADP + 2 H(+)</text>
        <dbReference type="Rhea" id="RHEA:24252"/>
        <dbReference type="ChEBI" id="CHEBI:15377"/>
        <dbReference type="ChEBI" id="CHEBI:15378"/>
        <dbReference type="ChEBI" id="CHEBI:58141"/>
        <dbReference type="ChEBI" id="CHEBI:456216"/>
        <dbReference type="EC" id="3.6.1.41"/>
    </reaction>
</comment>
<comment type="similarity">
    <text evidence="1">Belongs to the Ap4A hydrolase family.</text>
</comment>
<feature type="chain" id="PRO_1000124453" description="Bis(5'-nucleosyl)-tetraphosphatase, symmetrical">
    <location>
        <begin position="1"/>
        <end position="272"/>
    </location>
</feature>
<accession>B8F4P0</accession>
<organism>
    <name type="scientific">Glaesserella parasuis serovar 5 (strain SH0165)</name>
    <name type="common">Haemophilus parasuis</name>
    <dbReference type="NCBI Taxonomy" id="557723"/>
    <lineage>
        <taxon>Bacteria</taxon>
        <taxon>Pseudomonadati</taxon>
        <taxon>Pseudomonadota</taxon>
        <taxon>Gammaproteobacteria</taxon>
        <taxon>Pasteurellales</taxon>
        <taxon>Pasteurellaceae</taxon>
        <taxon>Glaesserella</taxon>
    </lineage>
</organism>
<reference key="1">
    <citation type="journal article" date="2009" name="J. Bacteriol.">
        <title>Complete genome sequence of Haemophilus parasuis SH0165.</title>
        <authorList>
            <person name="Yue M."/>
            <person name="Yang F."/>
            <person name="Yang J."/>
            <person name="Bei W."/>
            <person name="Cai X."/>
            <person name="Chen L."/>
            <person name="Dong J."/>
            <person name="Zhou R."/>
            <person name="Jin M."/>
            <person name="Jin Q."/>
            <person name="Chen H."/>
        </authorList>
    </citation>
    <scope>NUCLEOTIDE SEQUENCE [LARGE SCALE GENOMIC DNA]</scope>
    <source>
        <strain>SH0165</strain>
    </source>
</reference>
<protein>
    <recommendedName>
        <fullName evidence="1">Bis(5'-nucleosyl)-tetraphosphatase, symmetrical</fullName>
        <ecNumber evidence="1">3.6.1.41</ecNumber>
    </recommendedName>
    <alternativeName>
        <fullName evidence="1">Ap4A hydrolase</fullName>
    </alternativeName>
    <alternativeName>
        <fullName evidence="1">Diadenosine 5',5'''-P1,P4-tetraphosphate pyrophosphohydrolase</fullName>
    </alternativeName>
    <alternativeName>
        <fullName evidence="1">Diadenosine tetraphosphatase</fullName>
    </alternativeName>
</protein>
<sequence>MATYIVGDLHGCFDEFQLLLEQANFDPQYDELWLTGDLVARGENSLACLRYVKALGERATVVLGNHDVHLLSTLQGIKAVKPKDKVDAIFEAEDRLELQNWLRSRPLVAQHPVHQFLLVHAGVSPEWDLATTLACAREVEAVLQGEQFADFLAQMYGNSPDQWRADLQGIERWRYALNVFTRMRFCYADKRLDFDCKLPVEEAPEGLKPWFELDNPFYRQQPIIFGHWASLIGYQTPDTIYALDTGCVWGNHLTMLRWEDKHIFTQKRLNLD</sequence>